<evidence type="ECO:0000255" key="1"/>
<evidence type="ECO:0000255" key="2">
    <source>
        <dbReference type="PROSITE-ProRule" id="PRU00414"/>
    </source>
</evidence>
<evidence type="ECO:0000255" key="3">
    <source>
        <dbReference type="PROSITE-ProRule" id="PRU00415"/>
    </source>
</evidence>
<reference key="1">
    <citation type="journal article" date="1989" name="Biochim. Biophys. Acta">
        <title>cDNA and deduced amino acid sequence for the rat hydrophobic pulmonary surfactant-associated protein, SP-B.</title>
        <authorList>
            <person name="Emrie P.A."/>
            <person name="Shannon J.M."/>
            <person name="Mason R.J."/>
            <person name="Fisher J.H."/>
        </authorList>
    </citation>
    <scope>NUCLEOTIDE SEQUENCE [MRNA]</scope>
</reference>
<accession>P22355</accession>
<organism>
    <name type="scientific">Rattus norvegicus</name>
    <name type="common">Rat</name>
    <dbReference type="NCBI Taxonomy" id="10116"/>
    <lineage>
        <taxon>Eukaryota</taxon>
        <taxon>Metazoa</taxon>
        <taxon>Chordata</taxon>
        <taxon>Craniata</taxon>
        <taxon>Vertebrata</taxon>
        <taxon>Euteleostomi</taxon>
        <taxon>Mammalia</taxon>
        <taxon>Eutheria</taxon>
        <taxon>Euarchontoglires</taxon>
        <taxon>Glires</taxon>
        <taxon>Rodentia</taxon>
        <taxon>Myomorpha</taxon>
        <taxon>Muroidea</taxon>
        <taxon>Muridae</taxon>
        <taxon>Murinae</taxon>
        <taxon>Rattus</taxon>
    </lineage>
</organism>
<feature type="signal peptide" evidence="1">
    <location>
        <begin position="1"/>
        <end position="24"/>
    </location>
</feature>
<feature type="propeptide" id="PRO_0000031656">
    <location>
        <begin position="25"/>
        <end position="190"/>
    </location>
</feature>
<feature type="chain" id="PRO_0000031657" description="Pulmonary surfactant-associated protein B">
    <location>
        <begin position="191"/>
        <end position="269"/>
    </location>
</feature>
<feature type="propeptide" id="PRO_0000031658">
    <location>
        <begin position="270"/>
        <end position="376"/>
    </location>
</feature>
<feature type="domain" description="Saposin A-type" evidence="2">
    <location>
        <begin position="25"/>
        <end position="63"/>
    </location>
</feature>
<feature type="domain" description="Saposin B-type 1" evidence="3">
    <location>
        <begin position="63"/>
        <end position="145"/>
    </location>
</feature>
<feature type="domain" description="Saposin B-type 2" evidence="3">
    <location>
        <begin position="194"/>
        <end position="271"/>
    </location>
</feature>
<feature type="domain" description="Saposin B-type 3" evidence="3">
    <location>
        <begin position="290"/>
        <end position="365"/>
    </location>
</feature>
<feature type="glycosylation site" description="N-linked (GlcNAc...) asparagine" evidence="3">
    <location>
        <position position="306"/>
    </location>
</feature>
<feature type="disulfide bond" evidence="3">
    <location>
        <begin position="67"/>
        <end position="141"/>
    </location>
</feature>
<feature type="disulfide bond" evidence="3">
    <location>
        <begin position="70"/>
        <end position="135"/>
    </location>
</feature>
<feature type="disulfide bond" evidence="3">
    <location>
        <begin position="98"/>
        <end position="110"/>
    </location>
</feature>
<feature type="disulfide bond" evidence="3">
    <location>
        <begin position="198"/>
        <end position="267"/>
    </location>
</feature>
<feature type="disulfide bond" evidence="3">
    <location>
        <begin position="201"/>
        <end position="261"/>
    </location>
</feature>
<feature type="disulfide bond" evidence="3">
    <location>
        <begin position="225"/>
        <end position="236"/>
    </location>
</feature>
<feature type="disulfide bond" description="Interchain" evidence="3">
    <location>
        <position position="238"/>
    </location>
</feature>
<feature type="disulfide bond" evidence="3">
    <location>
        <begin position="294"/>
        <end position="361"/>
    </location>
</feature>
<feature type="disulfide bond" evidence="3">
    <location>
        <begin position="297"/>
        <end position="355"/>
    </location>
</feature>
<feature type="disulfide bond" evidence="3">
    <location>
        <begin position="320"/>
        <end position="330"/>
    </location>
</feature>
<proteinExistence type="evidence at transcript level"/>
<dbReference type="EMBL" id="X14778">
    <property type="protein sequence ID" value="CAA32885.1"/>
    <property type="molecule type" value="mRNA"/>
</dbReference>
<dbReference type="PIR" id="S02766">
    <property type="entry name" value="S02766"/>
</dbReference>
<dbReference type="RefSeq" id="NP_620197.1">
    <property type="nucleotide sequence ID" value="NM_138842.1"/>
</dbReference>
<dbReference type="SMR" id="P22355"/>
<dbReference type="FunCoup" id="P22355">
    <property type="interactions" value="3"/>
</dbReference>
<dbReference type="STRING" id="10116.ENSRNOP00000014505"/>
<dbReference type="GlyCosmos" id="P22355">
    <property type="glycosylation" value="1 site, No reported glycans"/>
</dbReference>
<dbReference type="GlyGen" id="P22355">
    <property type="glycosylation" value="1 site"/>
</dbReference>
<dbReference type="PhosphoSitePlus" id="P22355"/>
<dbReference type="PaxDb" id="10116-ENSRNOP00000014505"/>
<dbReference type="GeneID" id="192155"/>
<dbReference type="KEGG" id="rno:192155"/>
<dbReference type="UCSC" id="RGD:621700">
    <property type="organism name" value="rat"/>
</dbReference>
<dbReference type="AGR" id="RGD:621700"/>
<dbReference type="CTD" id="6439"/>
<dbReference type="RGD" id="621700">
    <property type="gene designation" value="Sftpb"/>
</dbReference>
<dbReference type="eggNOG" id="KOG1340">
    <property type="taxonomic scope" value="Eukaryota"/>
</dbReference>
<dbReference type="InParanoid" id="P22355"/>
<dbReference type="OrthoDB" id="8889685at2759"/>
<dbReference type="PhylomeDB" id="P22355"/>
<dbReference type="Reactome" id="R-RNO-5683826">
    <property type="pathway name" value="Surfactant metabolism"/>
</dbReference>
<dbReference type="PRO" id="PR:P22355"/>
<dbReference type="Proteomes" id="UP000002494">
    <property type="component" value="Unplaced"/>
</dbReference>
<dbReference type="GO" id="GO:0097208">
    <property type="term" value="C:alveolar lamellar body"/>
    <property type="evidence" value="ECO:0000314"/>
    <property type="project" value="RGD"/>
</dbReference>
<dbReference type="GO" id="GO:0005737">
    <property type="term" value="C:cytoplasm"/>
    <property type="evidence" value="ECO:0000266"/>
    <property type="project" value="RGD"/>
</dbReference>
<dbReference type="GO" id="GO:0005615">
    <property type="term" value="C:extracellular space"/>
    <property type="evidence" value="ECO:0000314"/>
    <property type="project" value="RGD"/>
</dbReference>
<dbReference type="GO" id="GO:0005764">
    <property type="term" value="C:lysosome"/>
    <property type="evidence" value="ECO:0007669"/>
    <property type="project" value="InterPro"/>
</dbReference>
<dbReference type="GO" id="GO:0016020">
    <property type="term" value="C:membrane"/>
    <property type="evidence" value="ECO:0007669"/>
    <property type="project" value="GOC"/>
</dbReference>
<dbReference type="GO" id="GO:0005771">
    <property type="term" value="C:multivesicular body"/>
    <property type="evidence" value="ECO:0000314"/>
    <property type="project" value="RGD"/>
</dbReference>
<dbReference type="GO" id="GO:0071260">
    <property type="term" value="P:cellular response to mechanical stimulus"/>
    <property type="evidence" value="ECO:0000270"/>
    <property type="project" value="RGD"/>
</dbReference>
<dbReference type="GO" id="GO:0071732">
    <property type="term" value="P:cellular response to nitric oxide"/>
    <property type="evidence" value="ECO:0000270"/>
    <property type="project" value="RGD"/>
</dbReference>
<dbReference type="GO" id="GO:0007623">
    <property type="term" value="P:circadian rhythm"/>
    <property type="evidence" value="ECO:0000270"/>
    <property type="project" value="RGD"/>
</dbReference>
<dbReference type="GO" id="GO:0007585">
    <property type="term" value="P:respiratory gaseous exchange by respiratory system"/>
    <property type="evidence" value="ECO:0007669"/>
    <property type="project" value="UniProtKB-KW"/>
</dbReference>
<dbReference type="GO" id="GO:0051591">
    <property type="term" value="P:response to cAMP"/>
    <property type="evidence" value="ECO:0000270"/>
    <property type="project" value="RGD"/>
</dbReference>
<dbReference type="GO" id="GO:0071548">
    <property type="term" value="P:response to dexamethasone"/>
    <property type="evidence" value="ECO:0000270"/>
    <property type="project" value="RGD"/>
</dbReference>
<dbReference type="GO" id="GO:0070849">
    <property type="term" value="P:response to epidermal growth factor"/>
    <property type="evidence" value="ECO:0000270"/>
    <property type="project" value="RGD"/>
</dbReference>
<dbReference type="GO" id="GO:0051384">
    <property type="term" value="P:response to glucocorticoid"/>
    <property type="evidence" value="ECO:0000270"/>
    <property type="project" value="RGD"/>
</dbReference>
<dbReference type="GO" id="GO:0009749">
    <property type="term" value="P:response to glucose"/>
    <property type="evidence" value="ECO:0000270"/>
    <property type="project" value="RGD"/>
</dbReference>
<dbReference type="GO" id="GO:0070848">
    <property type="term" value="P:response to growth factor"/>
    <property type="evidence" value="ECO:0000270"/>
    <property type="project" value="RGD"/>
</dbReference>
<dbReference type="GO" id="GO:0055093">
    <property type="term" value="P:response to hyperoxia"/>
    <property type="evidence" value="ECO:0000270"/>
    <property type="project" value="RGD"/>
</dbReference>
<dbReference type="GO" id="GO:0001666">
    <property type="term" value="P:response to hypoxia"/>
    <property type="evidence" value="ECO:0000270"/>
    <property type="project" value="RGD"/>
</dbReference>
<dbReference type="GO" id="GO:0070741">
    <property type="term" value="P:response to interleukin-6"/>
    <property type="evidence" value="ECO:0000270"/>
    <property type="project" value="RGD"/>
</dbReference>
<dbReference type="GO" id="GO:0044321">
    <property type="term" value="P:response to leptin"/>
    <property type="evidence" value="ECO:0000270"/>
    <property type="project" value="RGD"/>
</dbReference>
<dbReference type="GO" id="GO:0032496">
    <property type="term" value="P:response to lipopolysaccharide"/>
    <property type="evidence" value="ECO:0000270"/>
    <property type="project" value="RGD"/>
</dbReference>
<dbReference type="GO" id="GO:1904016">
    <property type="term" value="P:response to Thyroglobulin triiodothyronine"/>
    <property type="evidence" value="ECO:0000270"/>
    <property type="project" value="RGD"/>
</dbReference>
<dbReference type="GO" id="GO:0033189">
    <property type="term" value="P:response to vitamin A"/>
    <property type="evidence" value="ECO:0000270"/>
    <property type="project" value="RGD"/>
</dbReference>
<dbReference type="GO" id="GO:0006665">
    <property type="term" value="P:sphingolipid metabolic process"/>
    <property type="evidence" value="ECO:0007669"/>
    <property type="project" value="InterPro"/>
</dbReference>
<dbReference type="GO" id="GO:0043129">
    <property type="term" value="P:surfactant homeostasis"/>
    <property type="evidence" value="ECO:0000304"/>
    <property type="project" value="RGD"/>
</dbReference>
<dbReference type="FunFam" id="1.10.225.10:FF:000008">
    <property type="entry name" value="Pulmonary surfactant-associated protein B"/>
    <property type="match status" value="1"/>
</dbReference>
<dbReference type="FunFam" id="1.10.225.10:FF:000011">
    <property type="entry name" value="Pulmonary surfactant-associated protein B"/>
    <property type="match status" value="1"/>
</dbReference>
<dbReference type="Gene3D" id="1.10.225.10">
    <property type="entry name" value="Saposin-like"/>
    <property type="match status" value="2"/>
</dbReference>
<dbReference type="InterPro" id="IPR003119">
    <property type="entry name" value="SAP_A"/>
</dbReference>
<dbReference type="InterPro" id="IPR007856">
    <property type="entry name" value="SapB_1"/>
</dbReference>
<dbReference type="InterPro" id="IPR008138">
    <property type="entry name" value="SapB_2"/>
</dbReference>
<dbReference type="InterPro" id="IPR008373">
    <property type="entry name" value="Saposin"/>
</dbReference>
<dbReference type="InterPro" id="IPR011001">
    <property type="entry name" value="Saposin-like"/>
</dbReference>
<dbReference type="InterPro" id="IPR008139">
    <property type="entry name" value="SaposinB_dom"/>
</dbReference>
<dbReference type="InterPro" id="IPR051428">
    <property type="entry name" value="Sphingo_Act-Surfact_Prot"/>
</dbReference>
<dbReference type="PANTHER" id="PTHR11480:SF33">
    <property type="entry name" value="PULMONARY SURFACTANT-ASSOCIATED PROTEIN B"/>
    <property type="match status" value="1"/>
</dbReference>
<dbReference type="PANTHER" id="PTHR11480">
    <property type="entry name" value="SAPOSIN-RELATED"/>
    <property type="match status" value="1"/>
</dbReference>
<dbReference type="Pfam" id="PF02199">
    <property type="entry name" value="SapA"/>
    <property type="match status" value="1"/>
</dbReference>
<dbReference type="Pfam" id="PF05184">
    <property type="entry name" value="SapB_1"/>
    <property type="match status" value="1"/>
</dbReference>
<dbReference type="Pfam" id="PF03489">
    <property type="entry name" value="SapB_2"/>
    <property type="match status" value="2"/>
</dbReference>
<dbReference type="PRINTS" id="PR01797">
    <property type="entry name" value="SAPOSIN"/>
</dbReference>
<dbReference type="SMART" id="SM00162">
    <property type="entry name" value="SAPA"/>
    <property type="match status" value="1"/>
</dbReference>
<dbReference type="SMART" id="SM00741">
    <property type="entry name" value="SapB"/>
    <property type="match status" value="3"/>
</dbReference>
<dbReference type="SUPFAM" id="SSF47862">
    <property type="entry name" value="Saposin"/>
    <property type="match status" value="3"/>
</dbReference>
<dbReference type="PROSITE" id="PS51110">
    <property type="entry name" value="SAP_A"/>
    <property type="match status" value="1"/>
</dbReference>
<dbReference type="PROSITE" id="PS50015">
    <property type="entry name" value="SAP_B"/>
    <property type="match status" value="3"/>
</dbReference>
<keyword id="KW-1015">Disulfide bond</keyword>
<keyword id="KW-0305">Gaseous exchange</keyword>
<keyword id="KW-0325">Glycoprotein</keyword>
<keyword id="KW-1185">Reference proteome</keyword>
<keyword id="KW-0677">Repeat</keyword>
<keyword id="KW-0964">Secreted</keyword>
<keyword id="KW-0732">Signal</keyword>
<keyword id="KW-0767">Surface film</keyword>
<comment type="function">
    <text>Pulmonary surfactant-associated proteins promote alveolar stability by lowering the surface tension at the air-liquid interface in the peripheral air spaces. SP-B increases the collapse pressure of palmitic acid to nearly 70 millinewtons per meter.</text>
</comment>
<comment type="subunit">
    <text>Homodimer; disulfide-linked.</text>
</comment>
<comment type="subcellular location">
    <subcellularLocation>
        <location>Secreted</location>
        <location>Extracellular space</location>
        <location>Surface film</location>
    </subcellularLocation>
</comment>
<comment type="miscellaneous">
    <text>Pulmonary surfactant consists of 90% lipid and 10% protein. There are 4 surfactant-associated proteins: 2 collagenous, carbohydrate-binding glycoproteins (SP-A and SP-D) and 2 small hydrophobic proteins (SP-B and SP-C).</text>
</comment>
<gene>
    <name type="primary">Sftpb</name>
    <name type="synonym">Sftp3</name>
</gene>
<protein>
    <recommendedName>
        <fullName>Pulmonary surfactant-associated protein B</fullName>
        <shortName>SP-B</shortName>
    </recommendedName>
    <alternativeName>
        <fullName>Pulmonary surfactant-associated proteolipid SPL(Phe)</fullName>
    </alternativeName>
</protein>
<sequence>MAKLHLQWLLLLPTLCSLGAATESASSPDCAQGPKFWCQSLEQAIQCRALGHCLQEVWGHAGANDLCQECEDIVHLLTKMTKEDAFQDTIRKFLEQECDILPLKLLVPRCRQVLDVYLPLVIDYFQGQIKPKAICSHVGLCPLGQTKPEQKPEMLDAIPNPLLNKLVLPALPGAFLARPGPHTQDLSEQQLPIPLPFCWLCRTLIKRVQAVIPKGVLAVAVSQVCHVVPLVVGGICQCLAERYTVLLLDALLGRVVPQLVCGLVLRCSTADAIGPALPALEPLIEKWPLQDTECHFCKSVINQAWNTSEQAMPQAMHQACLRFWLDRQKCEQFVEQHMPQLLALVPRSQDAHTSCQALGVCEAPASPLQCFQTPHL</sequence>
<name>PSPB_RAT</name>